<accession>P22327</accession>
<dbReference type="EMBL" id="M57443">
    <property type="protein sequence ID" value="AAA27884.1"/>
    <property type="status" value="ALT_SEQ"/>
    <property type="molecule type" value="mRNA"/>
</dbReference>
<dbReference type="PIR" id="A36269">
    <property type="entry name" value="A36269"/>
</dbReference>
<dbReference type="SMR" id="P22327"/>
<dbReference type="GlyCosmos" id="P22327">
    <property type="glycosylation" value="2 sites, No reported glycans"/>
</dbReference>
<dbReference type="InParanoid" id="P22327"/>
<dbReference type="Proteomes" id="UP000322000">
    <property type="component" value="Unplaced"/>
</dbReference>
<dbReference type="GO" id="GO:0005576">
    <property type="term" value="C:extracellular region"/>
    <property type="evidence" value="ECO:0007669"/>
    <property type="project" value="UniProtKB-SubCell"/>
</dbReference>
<dbReference type="GO" id="GO:0045735">
    <property type="term" value="F:nutrient reservoir activity"/>
    <property type="evidence" value="ECO:0007669"/>
    <property type="project" value="UniProtKB-KW"/>
</dbReference>
<dbReference type="Gene3D" id="1.10.1280.10">
    <property type="entry name" value="Di-copper center containing domain from catechol oxidase"/>
    <property type="match status" value="1"/>
</dbReference>
<dbReference type="Gene3D" id="2.60.40.1520">
    <property type="entry name" value="Hemocyanin, C-terminal domain"/>
    <property type="match status" value="1"/>
</dbReference>
<dbReference type="Gene3D" id="1.20.1370.10">
    <property type="entry name" value="Hemocyanin, N-terminal domain"/>
    <property type="match status" value="1"/>
</dbReference>
<dbReference type="InterPro" id="IPR008922">
    <property type="entry name" value="Di-copper_centre_dom_sf"/>
</dbReference>
<dbReference type="InterPro" id="IPR013788">
    <property type="entry name" value="Hemocyanin/hexamerin"/>
</dbReference>
<dbReference type="InterPro" id="IPR000896">
    <property type="entry name" value="Hemocyanin/hexamerin_mid_dom"/>
</dbReference>
<dbReference type="InterPro" id="IPR005203">
    <property type="entry name" value="Hemocyanin_C"/>
</dbReference>
<dbReference type="InterPro" id="IPR037020">
    <property type="entry name" value="Hemocyanin_C_sf"/>
</dbReference>
<dbReference type="InterPro" id="IPR005204">
    <property type="entry name" value="Hemocyanin_N"/>
</dbReference>
<dbReference type="InterPro" id="IPR036697">
    <property type="entry name" value="Hemocyanin_N_sf"/>
</dbReference>
<dbReference type="InterPro" id="IPR014756">
    <property type="entry name" value="Ig_E-set"/>
</dbReference>
<dbReference type="PANTHER" id="PTHR11511:SF5">
    <property type="entry name" value="FAT-BODY PROTEIN 1-RELATED"/>
    <property type="match status" value="1"/>
</dbReference>
<dbReference type="PANTHER" id="PTHR11511">
    <property type="entry name" value="LARVAL STORAGE PROTEIN/PHENOLOXIDASE"/>
    <property type="match status" value="1"/>
</dbReference>
<dbReference type="Pfam" id="PF03723">
    <property type="entry name" value="Hemocyanin_C"/>
    <property type="match status" value="1"/>
</dbReference>
<dbReference type="Pfam" id="PF00372">
    <property type="entry name" value="Hemocyanin_M"/>
    <property type="match status" value="1"/>
</dbReference>
<dbReference type="Pfam" id="PF03722">
    <property type="entry name" value="Hemocyanin_N"/>
    <property type="match status" value="1"/>
</dbReference>
<dbReference type="SUPFAM" id="SSF48056">
    <property type="entry name" value="Di-copper centre-containing domain"/>
    <property type="match status" value="1"/>
</dbReference>
<dbReference type="SUPFAM" id="SSF81296">
    <property type="entry name" value="E set domains"/>
    <property type="match status" value="1"/>
</dbReference>
<dbReference type="SUPFAM" id="SSF48050">
    <property type="entry name" value="Hemocyanin, N-terminal domain"/>
    <property type="match status" value="1"/>
</dbReference>
<dbReference type="PROSITE" id="PS00210">
    <property type="entry name" value="HEMOCYANIN_2"/>
    <property type="match status" value="1"/>
</dbReference>
<proteinExistence type="evidence at protein level"/>
<name>AJSP1_TRINI</name>
<reference key="1">
    <citation type="journal article" date="1990" name="J. Biol. Chem.">
        <title>Molecular cloning, regulation, and complete sequence of a hemocyanin-related, juvenile hormone-suppressible protein from insect hemolymph.</title>
        <authorList>
            <person name="Jones G."/>
            <person name="Brown N."/>
            <person name="Manczak M."/>
            <person name="Hiremath S."/>
            <person name="Kafatos F.C."/>
        </authorList>
    </citation>
    <scope>NUCLEOTIDE SEQUENCE [MRNA]</scope>
    <scope>PROTEIN SEQUENCE OF 19-40</scope>
    <source>
        <tissue>Hemolymph</tissue>
    </source>
</reference>
<protein>
    <recommendedName>
        <fullName>Acidic juvenile hormone-suppressible protein 1</fullName>
        <shortName>AJHSP1</shortName>
    </recommendedName>
</protein>
<comment type="subcellular location">
    <subcellularLocation>
        <location>Secreted</location>
        <location>Extracellular space</location>
    </subcellularLocation>
</comment>
<comment type="developmental stage">
    <text>Associated with larval metamorphosis.</text>
</comment>
<comment type="induction">
    <text>Suppressed by juvenile hormone.</text>
</comment>
<comment type="similarity">
    <text evidence="3">Belongs to the hemocyanin family.</text>
</comment>
<organism>
    <name type="scientific">Trichoplusia ni</name>
    <name type="common">Cabbage looper</name>
    <dbReference type="NCBI Taxonomy" id="7111"/>
    <lineage>
        <taxon>Eukaryota</taxon>
        <taxon>Metazoa</taxon>
        <taxon>Ecdysozoa</taxon>
        <taxon>Arthropoda</taxon>
        <taxon>Hexapoda</taxon>
        <taxon>Insecta</taxon>
        <taxon>Pterygota</taxon>
        <taxon>Neoptera</taxon>
        <taxon>Endopterygota</taxon>
        <taxon>Lepidoptera</taxon>
        <taxon>Glossata</taxon>
        <taxon>Ditrysia</taxon>
        <taxon>Noctuoidea</taxon>
        <taxon>Noctuidae</taxon>
        <taxon>Plusiinae</taxon>
        <taxon>Trichoplusia</taxon>
    </lineage>
</organism>
<feature type="signal peptide" evidence="2">
    <location>
        <begin position="1"/>
        <end position="18"/>
    </location>
</feature>
<feature type="chain" id="PRO_0000013342" description="Acidic juvenile hormone-suppressible protein 1">
    <location>
        <begin position="19"/>
        <end position="624"/>
    </location>
</feature>
<feature type="glycosylation site" description="N-linked (GlcNAc...) asparagine" evidence="1">
    <location>
        <position position="75"/>
    </location>
</feature>
<feature type="glycosylation site" description="N-linked (GlcNAc...) asparagine" evidence="1">
    <location>
        <position position="478"/>
    </location>
</feature>
<evidence type="ECO:0000255" key="1"/>
<evidence type="ECO:0000269" key="2">
    <source>
    </source>
</evidence>
<evidence type="ECO:0000305" key="3"/>
<gene>
    <name type="primary">AJSP-1</name>
</gene>
<sequence>MARLVLCALALLVAGGLADPVRNNVPQKPADPVFAKRQMDLMTLFFHVLEPNYIEANKVIVNTWSLEKNIEHFSNVTAVTTYIKMLENQCCVPRAVPFSILEDEHKFEVVTLFNVLHSAKDYDTFYKTAVYVRDRVNPDLFSYVLSAVIVNRPDTKGIYIPRVFEIFPSYFNNGEIMTTAARINTHGDRLVDFYPSTYKWDKNVVIRWNPHLALLQQPEHTYSLLHSRLQPQLILLQRSLSLPGWLQTEALPVNQHRRGEWFWFLHKQLIARYYMERLSNGLGEIPELGHETVKDGTTRSFGTTMEFSSPVRPNNFNLDQPEFVNEVEQIYDYERRVRDAIDQGYVLNHLGERIDISAPEAIEILGRVIEANVDSPNVQYYKDFISVWKKVLGNSLVHEHQYFHHYIPLVVPSVLEHYQTALRDPAFYMIWKRVLGLFQQWQEKLPHYKPEELAMPQVAIEKVDVDKLVTYFEYSYMNVTSGLPMNVEEAKELYDQVSVLVQHPRLNHKKFQVRVNVKTEVAKTVLVKFFLAPKYDSHGHEIPLHVNSYNFMQLDEFVYDLPQGESVITRDSVETTGNEWTTSYQVWDQAEKASREKHLSAKNMYFQDVLIYHKHTLNPCSHVE</sequence>
<keyword id="KW-0903">Direct protein sequencing</keyword>
<keyword id="KW-0325">Glycoprotein</keyword>
<keyword id="KW-1185">Reference proteome</keyword>
<keyword id="KW-0964">Secreted</keyword>
<keyword id="KW-0732">Signal</keyword>
<keyword id="KW-0758">Storage protein</keyword>